<organism>
    <name type="scientific">Saccharomyces cerevisiae (strain ATCC 204508 / S288c)</name>
    <name type="common">Baker's yeast</name>
    <dbReference type="NCBI Taxonomy" id="559292"/>
    <lineage>
        <taxon>Eukaryota</taxon>
        <taxon>Fungi</taxon>
        <taxon>Dikarya</taxon>
        <taxon>Ascomycota</taxon>
        <taxon>Saccharomycotina</taxon>
        <taxon>Saccharomycetes</taxon>
        <taxon>Saccharomycetales</taxon>
        <taxon>Saccharomycetaceae</taxon>
        <taxon>Saccharomyces</taxon>
    </lineage>
</organism>
<reference key="1">
    <citation type="journal article" date="1990" name="J. Biol. Chem.">
        <title>COX10 codes for a protein homologous to the ORF1 product of Paracoccus denitrificans and is required for the synthesis of yeast cytochrome oxidase.</title>
        <authorList>
            <person name="Nobrega M.P."/>
            <person name="Nobrega F.G."/>
            <person name="Tzagoloff A."/>
        </authorList>
    </citation>
    <scope>NUCLEOTIDE SEQUENCE [GENOMIC DNA]</scope>
</reference>
<reference key="2">
    <citation type="journal article" date="1997" name="Nature">
        <title>The nucleotide sequence of Saccharomyces cerevisiae chromosome XVI.</title>
        <authorList>
            <person name="Bussey H."/>
            <person name="Storms R.K."/>
            <person name="Ahmed A."/>
            <person name="Albermann K."/>
            <person name="Allen E."/>
            <person name="Ansorge W."/>
            <person name="Araujo R."/>
            <person name="Aparicio A."/>
            <person name="Barrell B.G."/>
            <person name="Badcock K."/>
            <person name="Benes V."/>
            <person name="Botstein D."/>
            <person name="Bowman S."/>
            <person name="Brueckner M."/>
            <person name="Carpenter J."/>
            <person name="Cherry J.M."/>
            <person name="Chung E."/>
            <person name="Churcher C.M."/>
            <person name="Coster F."/>
            <person name="Davis K."/>
            <person name="Davis R.W."/>
            <person name="Dietrich F.S."/>
            <person name="Delius H."/>
            <person name="DiPaolo T."/>
            <person name="Dubois E."/>
            <person name="Duesterhoeft A."/>
            <person name="Duncan M."/>
            <person name="Floeth M."/>
            <person name="Fortin N."/>
            <person name="Friesen J.D."/>
            <person name="Fritz C."/>
            <person name="Goffeau A."/>
            <person name="Hall J."/>
            <person name="Hebling U."/>
            <person name="Heumann K."/>
            <person name="Hilbert H."/>
            <person name="Hillier L.W."/>
            <person name="Hunicke-Smith S."/>
            <person name="Hyman R.W."/>
            <person name="Johnston M."/>
            <person name="Kalman S."/>
            <person name="Kleine K."/>
            <person name="Komp C."/>
            <person name="Kurdi O."/>
            <person name="Lashkari D."/>
            <person name="Lew H."/>
            <person name="Lin A."/>
            <person name="Lin D."/>
            <person name="Louis E.J."/>
            <person name="Marathe R."/>
            <person name="Messenguy F."/>
            <person name="Mewes H.-W."/>
            <person name="Mirtipati S."/>
            <person name="Moestl D."/>
            <person name="Mueller-Auer S."/>
            <person name="Namath A."/>
            <person name="Nentwich U."/>
            <person name="Oefner P."/>
            <person name="Pearson D."/>
            <person name="Petel F.X."/>
            <person name="Pohl T.M."/>
            <person name="Purnelle B."/>
            <person name="Rajandream M.A."/>
            <person name="Rechmann S."/>
            <person name="Rieger M."/>
            <person name="Riles L."/>
            <person name="Roberts D."/>
            <person name="Schaefer M."/>
            <person name="Scharfe M."/>
            <person name="Scherens B."/>
            <person name="Schramm S."/>
            <person name="Schroeder M."/>
            <person name="Sdicu A.-M."/>
            <person name="Tettelin H."/>
            <person name="Urrestarazu L.A."/>
            <person name="Ushinsky S."/>
            <person name="Vierendeels F."/>
            <person name="Vissers S."/>
            <person name="Voss H."/>
            <person name="Walsh S.V."/>
            <person name="Wambutt R."/>
            <person name="Wang Y."/>
            <person name="Wedler E."/>
            <person name="Wedler H."/>
            <person name="Winnett E."/>
            <person name="Zhong W.-W."/>
            <person name="Zollner A."/>
            <person name="Vo D.H."/>
            <person name="Hani J."/>
        </authorList>
    </citation>
    <scope>NUCLEOTIDE SEQUENCE [LARGE SCALE GENOMIC DNA]</scope>
    <source>
        <strain>ATCC 204508 / S288c</strain>
    </source>
</reference>
<reference key="3">
    <citation type="journal article" date="2014" name="G3 (Bethesda)">
        <title>The reference genome sequence of Saccharomyces cerevisiae: Then and now.</title>
        <authorList>
            <person name="Engel S.R."/>
            <person name="Dietrich F.S."/>
            <person name="Fisk D.G."/>
            <person name="Binkley G."/>
            <person name="Balakrishnan R."/>
            <person name="Costanzo M.C."/>
            <person name="Dwight S.S."/>
            <person name="Hitz B.C."/>
            <person name="Karra K."/>
            <person name="Nash R.S."/>
            <person name="Weng S."/>
            <person name="Wong E.D."/>
            <person name="Lloyd P."/>
            <person name="Skrzypek M.S."/>
            <person name="Miyasato S.R."/>
            <person name="Simison M."/>
            <person name="Cherry J.M."/>
        </authorList>
    </citation>
    <scope>GENOME REANNOTATION</scope>
    <source>
        <strain>ATCC 204508 / S288c</strain>
    </source>
</reference>
<reference key="4">
    <citation type="journal article" date="1995" name="J. Biol. Chem.">
        <title>A new old yellow enzyme of Saccharomyces cerevisiae.</title>
        <authorList>
            <person name="Niino Y.S."/>
            <person name="Chakraborty S."/>
            <person name="Brown B.J."/>
            <person name="Massey V."/>
        </authorList>
    </citation>
    <scope>NUCLEOTIDE SEQUENCE [GENOMIC DNA] OF 1-30</scope>
    <source>
        <strain>RZ49-1</strain>
    </source>
</reference>
<reference key="5">
    <citation type="journal article" date="1993" name="Biochem. Mol. Biol. Int.">
        <title>On the functions of the yeast COX10 and COX11 gene products.</title>
        <authorList>
            <person name="Tzagoloff A."/>
            <person name="Nobrega M."/>
            <person name="Gorman N."/>
            <person name="Sinclair P."/>
        </authorList>
    </citation>
    <scope>FUNCTION</scope>
    <scope>CATALYTIC ACTIVITY</scope>
</reference>
<reference key="6">
    <citation type="journal article" date="2002" name="FEBS Lett.">
        <title>Regulation of the heme A biosynthetic pathway in Saccharomyces cerevisiae.</title>
        <authorList>
            <person name="Barros M.H."/>
            <person name="Tzagoloff A."/>
        </authorList>
    </citation>
    <scope>FUNCTION</scope>
    <scope>ACTIVITY REGULATION</scope>
</reference>
<reference key="7">
    <citation type="journal article" date="2003" name="Proc. Natl. Acad. Sci. U.S.A.">
        <title>The proteome of Saccharomyces cerevisiae mitochondria.</title>
        <authorList>
            <person name="Sickmann A."/>
            <person name="Reinders J."/>
            <person name="Wagner Y."/>
            <person name="Joppich C."/>
            <person name="Zahedi R.P."/>
            <person name="Meyer H.E."/>
            <person name="Schoenfisch B."/>
            <person name="Perschil I."/>
            <person name="Chacinska A."/>
            <person name="Guiard B."/>
            <person name="Rehling P."/>
            <person name="Pfanner N."/>
            <person name="Meisinger C."/>
        </authorList>
    </citation>
    <scope>SUBCELLULAR LOCATION [LARGE SCALE ANALYSIS]</scope>
</reference>
<reference key="8">
    <citation type="journal article" date="2006" name="J. Proteome Res.">
        <title>Toward the complete yeast mitochondrial proteome: multidimensional separation techniques for mitochondrial proteomics.</title>
        <authorList>
            <person name="Reinders J."/>
            <person name="Zahedi R.P."/>
            <person name="Pfanner N."/>
            <person name="Meisinger C."/>
            <person name="Sickmann A."/>
        </authorList>
    </citation>
    <scope>SUBCELLULAR LOCATION [LARGE SCALE ANALYSIS]</scope>
</reference>
<reference key="9">
    <citation type="journal article" date="2009" name="J. Biol. Chem.">
        <title>Regulation of the heme A biosynthetic pathway: differential regulation of heme A synthase and heme O synthase in Saccharomyces cerevisiae.</title>
        <authorList>
            <person name="Wang Z."/>
            <person name="Wang Y."/>
            <person name="Hegg E.L."/>
        </authorList>
    </citation>
    <scope>INDUCTION</scope>
</reference>
<reference key="10">
    <citation type="journal article" date="2010" name="Mol. Cell. Biol.">
        <title>The role of Coa2 in hemylation of yeast Cox1 revealed by its genetic interaction with Cox10.</title>
        <authorList>
            <person name="Bestwick M."/>
            <person name="Khalimonchuk O."/>
            <person name="Pierrel F."/>
            <person name="Winge D.R."/>
        </authorList>
    </citation>
    <scope>FUNCTION</scope>
    <scope>CATALYTIC ACTIVITY</scope>
    <scope>SUBUNIT</scope>
    <scope>MUTAGENESIS OF ASN-196; ARG-212; ARG-216 AND HIS-317</scope>
</reference>
<reference key="11">
    <citation type="journal article" date="2012" name="J. Biol. Chem.">
        <title>Oligomerization of heme o synthase in cytochrome oxidase biogenesis is mediated by cytochrome oxidase assembly factor Coa2.</title>
        <authorList>
            <person name="Khalimonchuk O."/>
            <person name="Kim H."/>
            <person name="Watts T."/>
            <person name="Perez-Martinez X."/>
            <person name="Winge D.R."/>
        </authorList>
    </citation>
    <scope>SUBUNIT</scope>
    <scope>MUTAGENESIS OF GLU-328</scope>
</reference>
<protein>
    <recommendedName>
        <fullName>Protoheme IX farnesyltransferase, mitochondrial</fullName>
        <ecNumber evidence="11">2.5.1.141</ecNumber>
    </recommendedName>
    <alternativeName>
        <fullName>Heme O synthase</fullName>
        <shortName>HOS</shortName>
    </alternativeName>
</protein>
<feature type="transit peptide" description="Mitochondrion" evidence="1">
    <location>
        <begin position="1"/>
        <end position="30"/>
    </location>
</feature>
<feature type="chain" id="PRO_0000035925" description="Protoheme IX farnesyltransferase, mitochondrial">
    <location>
        <begin position="31"/>
        <end position="462"/>
    </location>
</feature>
<feature type="transmembrane region" description="Helical" evidence="1">
    <location>
        <begin position="158"/>
        <end position="178"/>
    </location>
</feature>
<feature type="transmembrane region" description="Helical" evidence="1">
    <location>
        <begin position="234"/>
        <end position="254"/>
    </location>
</feature>
<feature type="transmembrane region" description="Helical" evidence="1">
    <location>
        <begin position="274"/>
        <end position="294"/>
    </location>
</feature>
<feature type="transmembrane region" description="Helical" evidence="1">
    <location>
        <begin position="298"/>
        <end position="318"/>
    </location>
</feature>
<feature type="transmembrane region" description="Helical" evidence="1">
    <location>
        <begin position="352"/>
        <end position="372"/>
    </location>
</feature>
<feature type="transmembrane region" description="Helical" evidence="1">
    <location>
        <begin position="373"/>
        <end position="393"/>
    </location>
</feature>
<feature type="transmembrane region" description="Helical" evidence="1">
    <location>
        <begin position="425"/>
        <end position="445"/>
    </location>
</feature>
<feature type="mutagenesis site" description="Gain-of-function and specific suppressor of coa2 deletion cells. Does not attenuate catalytic activity. Forms more abundant high-molecular-weight complexes. Has no catalytic activity and does not form high-molecular-weight complexes; when associated with A-317. Restored function; when associated with A-212 and A-216." evidence="6">
    <original>N</original>
    <variation>K</variation>
    <location>
        <position position="196"/>
    </location>
</feature>
<feature type="mutagenesis site" description="Loss of function; when associated with A-216. Restored function; when associated with A-216 and K-196." evidence="6">
    <original>R</original>
    <variation>A</variation>
    <location>
        <position position="212"/>
    </location>
</feature>
<feature type="mutagenesis site" description="Loss of function; when associated with A-212. Restored function; when associated with A-212 and K-196." evidence="6">
    <original>R</original>
    <variation>A</variation>
    <location>
        <position position="216"/>
    </location>
</feature>
<feature type="mutagenesis site" description="Abolishes catalytic activity. Has no catalytic activity and does not form high-molecular-weight complexes; when associated with K-196." evidence="6">
    <original>H</original>
    <variation>A</variation>
    <location>
        <position position="317"/>
    </location>
</feature>
<feature type="mutagenesis site" description="Impairs respiration and CcO activity." evidence="7">
    <original>E</original>
    <variation>G</variation>
    <location>
        <position position="328"/>
    </location>
</feature>
<feature type="mutagenesis site" description="No effect." evidence="7">
    <original>E</original>
    <variation>V</variation>
    <location>
        <position position="328"/>
    </location>
</feature>
<keyword id="KW-0350">Heme biosynthesis</keyword>
<keyword id="KW-0472">Membrane</keyword>
<keyword id="KW-0496">Mitochondrion</keyword>
<keyword id="KW-1185">Reference proteome</keyword>
<keyword id="KW-0808">Transferase</keyword>
<keyword id="KW-0809">Transit peptide</keyword>
<keyword id="KW-0812">Transmembrane</keyword>
<keyword id="KW-1133">Transmembrane helix</keyword>
<name>COX10_YEAST</name>
<dbReference type="EC" id="2.5.1.141" evidence="11"/>
<dbReference type="EMBL" id="M55566">
    <property type="protein sequence ID" value="AAA34509.1"/>
    <property type="molecule type" value="Genomic_DNA"/>
</dbReference>
<dbReference type="EMBL" id="Z73528">
    <property type="protein sequence ID" value="CAA97879.1"/>
    <property type="molecule type" value="Genomic_DNA"/>
</dbReference>
<dbReference type="EMBL" id="L29279">
    <property type="protein sequence ID" value="AAA64523.1"/>
    <property type="molecule type" value="Genomic_DNA"/>
</dbReference>
<dbReference type="EMBL" id="BK006949">
    <property type="protein sequence ID" value="DAA11262.1"/>
    <property type="molecule type" value="Genomic_DNA"/>
</dbReference>
<dbReference type="PIR" id="A37812">
    <property type="entry name" value="COBY10"/>
</dbReference>
<dbReference type="RefSeq" id="NP_015153.1">
    <property type="nucleotide sequence ID" value="NM_001183986.1"/>
</dbReference>
<dbReference type="SMR" id="P21592"/>
<dbReference type="BioGRID" id="36011">
    <property type="interactions" value="433"/>
</dbReference>
<dbReference type="DIP" id="DIP-3982N"/>
<dbReference type="FunCoup" id="P21592">
    <property type="interactions" value="992"/>
</dbReference>
<dbReference type="STRING" id="4932.YPL172C"/>
<dbReference type="GlyGen" id="P21592">
    <property type="glycosylation" value="1 site"/>
</dbReference>
<dbReference type="PaxDb" id="4932-YPL172C"/>
<dbReference type="PeptideAtlas" id="P21592"/>
<dbReference type="EnsemblFungi" id="YPL172C_mRNA">
    <property type="protein sequence ID" value="YPL172C"/>
    <property type="gene ID" value="YPL172C"/>
</dbReference>
<dbReference type="GeneID" id="855931"/>
<dbReference type="KEGG" id="sce:YPL172C"/>
<dbReference type="AGR" id="SGD:S000006093"/>
<dbReference type="SGD" id="S000006093">
    <property type="gene designation" value="COX10"/>
</dbReference>
<dbReference type="VEuPathDB" id="FungiDB:YPL172C"/>
<dbReference type="eggNOG" id="KOG1380">
    <property type="taxonomic scope" value="Eukaryota"/>
</dbReference>
<dbReference type="GeneTree" id="ENSGT00940000153771"/>
<dbReference type="HOGENOM" id="CLU_029631_2_1_1"/>
<dbReference type="InParanoid" id="P21592"/>
<dbReference type="OMA" id="MGREPDF"/>
<dbReference type="OrthoDB" id="5211at2759"/>
<dbReference type="BioCyc" id="YEAST:G3O-34067-MONOMER"/>
<dbReference type="BRENDA" id="2.5.1.141">
    <property type="organism ID" value="984"/>
</dbReference>
<dbReference type="Reactome" id="R-SCE-189451">
    <property type="pathway name" value="Heme biosynthesis"/>
</dbReference>
<dbReference type="UniPathway" id="UPA00834">
    <property type="reaction ID" value="UER00712"/>
</dbReference>
<dbReference type="BioGRID-ORCS" id="855931">
    <property type="hits" value="2 hits in 10 CRISPR screens"/>
</dbReference>
<dbReference type="PRO" id="PR:P21592"/>
<dbReference type="Proteomes" id="UP000002311">
    <property type="component" value="Chromosome XVI"/>
</dbReference>
<dbReference type="RNAct" id="P21592">
    <property type="molecule type" value="protein"/>
</dbReference>
<dbReference type="GO" id="GO:0031966">
    <property type="term" value="C:mitochondrial membrane"/>
    <property type="evidence" value="ECO:0007669"/>
    <property type="project" value="UniProtKB-SubCell"/>
</dbReference>
<dbReference type="GO" id="GO:0005739">
    <property type="term" value="C:mitochondrion"/>
    <property type="evidence" value="ECO:0007005"/>
    <property type="project" value="SGD"/>
</dbReference>
<dbReference type="GO" id="GO:0008495">
    <property type="term" value="F:protoheme IX farnesyltransferase activity"/>
    <property type="evidence" value="ECO:0000250"/>
    <property type="project" value="SGD"/>
</dbReference>
<dbReference type="GO" id="GO:0006784">
    <property type="term" value="P:heme A biosynthetic process"/>
    <property type="evidence" value="ECO:0000315"/>
    <property type="project" value="SGD"/>
</dbReference>
<dbReference type="GO" id="GO:0048034">
    <property type="term" value="P:heme O biosynthetic process"/>
    <property type="evidence" value="ECO:0007669"/>
    <property type="project" value="UniProtKB-UniPathway"/>
</dbReference>
<dbReference type="CDD" id="cd13957">
    <property type="entry name" value="PT_UbiA_Cox10"/>
    <property type="match status" value="1"/>
</dbReference>
<dbReference type="FunFam" id="1.10.357.140:FF:000004">
    <property type="entry name" value="Protoheme IX farnesyltransferase, mitochondrial"/>
    <property type="match status" value="1"/>
</dbReference>
<dbReference type="Gene3D" id="1.10.357.140">
    <property type="entry name" value="UbiA prenyltransferase"/>
    <property type="match status" value="1"/>
</dbReference>
<dbReference type="InterPro" id="IPR006369">
    <property type="entry name" value="Protohaem_IX_farnesylTrfase"/>
</dbReference>
<dbReference type="InterPro" id="IPR016315">
    <property type="entry name" value="Protohaem_IX_farnesylTrfase_mt"/>
</dbReference>
<dbReference type="InterPro" id="IPR000537">
    <property type="entry name" value="UbiA_prenyltransferase"/>
</dbReference>
<dbReference type="InterPro" id="IPR030470">
    <property type="entry name" value="UbiA_prenylTrfase_CS"/>
</dbReference>
<dbReference type="InterPro" id="IPR044878">
    <property type="entry name" value="UbiA_sf"/>
</dbReference>
<dbReference type="NCBIfam" id="TIGR01473">
    <property type="entry name" value="cyoE_ctaB"/>
    <property type="match status" value="1"/>
</dbReference>
<dbReference type="PANTHER" id="PTHR43448">
    <property type="entry name" value="PROTOHEME IX FARNESYLTRANSFERASE, MITOCHONDRIAL"/>
    <property type="match status" value="1"/>
</dbReference>
<dbReference type="PANTHER" id="PTHR43448:SF2">
    <property type="entry name" value="PROTOHEME IX FARNESYLTRANSFERASE, MITOCHONDRIAL"/>
    <property type="match status" value="1"/>
</dbReference>
<dbReference type="Pfam" id="PF01040">
    <property type="entry name" value="UbiA"/>
    <property type="match status" value="1"/>
</dbReference>
<dbReference type="PIRSF" id="PIRSF001773">
    <property type="entry name" value="COX10"/>
    <property type="match status" value="1"/>
</dbReference>
<dbReference type="PROSITE" id="PS00943">
    <property type="entry name" value="UBIA"/>
    <property type="match status" value="1"/>
</dbReference>
<proteinExistence type="evidence at protein level"/>
<comment type="function">
    <text evidence="8">Catalyzes the first reaction in the biosynthesis of heme A, a prosthetic group of mitochondrial cytochrome c oxidase (CcO). Heme A is synthesized from heme B by two sequential enzymatic reactions catalyzed by heme O synthase (HOS/COX10) and heme A synthase (HAS/COX15). HOS converts heme B (protoheme IX) to heme O by substitution of the vinyl group on carbon 2 of heme B porphyrin ring with a hydroxyethyl farnesyl side group.</text>
</comment>
<comment type="catalytic activity">
    <reaction evidence="10 11">
        <text>heme b + (2E,6E)-farnesyl diphosphate + H2O = Fe(II)-heme o + diphosphate</text>
        <dbReference type="Rhea" id="RHEA:28070"/>
        <dbReference type="ChEBI" id="CHEBI:15377"/>
        <dbReference type="ChEBI" id="CHEBI:33019"/>
        <dbReference type="ChEBI" id="CHEBI:60344"/>
        <dbReference type="ChEBI" id="CHEBI:60530"/>
        <dbReference type="ChEBI" id="CHEBI:175763"/>
        <dbReference type="EC" id="2.5.1.141"/>
    </reaction>
</comment>
<comment type="activity regulation">
    <text evidence="2">Positively regulated by the hydroxylated intermediate (heme I) formed at the subsequent step, or by HAS/COX15 itself.</text>
</comment>
<comment type="pathway">
    <text>Porphyrin-containing compound metabolism; heme O biosynthesis; heme O from protoheme: step 1/1.</text>
</comment>
<comment type="subunit">
    <text evidence="6 7">Forms ~370 kDa homooligomeric complexes.</text>
</comment>
<comment type="subcellular location">
    <subcellularLocation>
        <location evidence="3 4">Mitochondrion</location>
    </subcellularLocation>
    <subcellularLocation>
        <location evidence="9">Mitochondrion membrane</location>
        <topology evidence="1">Multi-pass membrane protein</topology>
    </subcellularLocation>
</comment>
<comment type="induction">
    <text evidence="5">Not regulated by intracellular heme levels.</text>
</comment>
<comment type="similarity">
    <text evidence="9">Belongs to the UbiA prenyltransferase family.</text>
</comment>
<sequence length="462" mass="52148">MSYFPRTYAHLMRNVLAHNKGNIYLQIGTQLHDTQIKIRFNGVRYISRNHGGKQQHINTAPIEFTPNFGYGDRTSNCNKKVESTAMKTLRCTDDISTSSGSEATTDASTQLPFNVKLVDPMVRKSKRPSHAISEGLNMKTLKKKVIMPYLQLTKPRLTILVMLSAICSYALSPYPASVNELLCLTVGTTLCSGSANAINMGREPEFDRQMVRTQARPVVRGDVTPTQAFEFAALIGTLGVSILYFGVNPTVAILGASNIALYGWAYTSMKRKHIINTWLGALVGMVPPLMGWAAASPLSHPGSWCLAGLLFAWQFPHFNTLSHNIRNEYKNAGYVMTAWKNPLLNARVSLRYSILMFPLCFGLSYFNITDWYYQIDSGLINAWLTFWAFKFYWQQRINYSAKTLKDNVKFNKGLSVANIYARKTFMASVLHLPAILILAIIHKKGRWDWIYPGEAKRPQERF</sequence>
<gene>
    <name type="primary">COX10</name>
    <name type="ordered locus">YPL172C</name>
</gene>
<evidence type="ECO:0000255" key="1"/>
<evidence type="ECO:0000269" key="2">
    <source>
    </source>
</evidence>
<evidence type="ECO:0000269" key="3">
    <source>
    </source>
</evidence>
<evidence type="ECO:0000269" key="4">
    <source>
    </source>
</evidence>
<evidence type="ECO:0000269" key="5">
    <source>
    </source>
</evidence>
<evidence type="ECO:0000269" key="6">
    <source>
    </source>
</evidence>
<evidence type="ECO:0000269" key="7">
    <source>
    </source>
</evidence>
<evidence type="ECO:0000269" key="8">
    <source>
    </source>
</evidence>
<evidence type="ECO:0000305" key="9"/>
<evidence type="ECO:0000305" key="10">
    <source>
    </source>
</evidence>
<evidence type="ECO:0000305" key="11">
    <source>
    </source>
</evidence>
<accession>P21592</accession>
<accession>D6W3J6</accession>